<feature type="chain" id="PRO_0000066854" description="Potassium channel toxin gamma-KTx 1.4">
    <location>
        <begin position="1"/>
        <end position="42"/>
    </location>
</feature>
<feature type="disulfide bond" evidence="2">
    <location>
        <begin position="5"/>
        <end position="23"/>
    </location>
</feature>
<feature type="disulfide bond" evidence="2">
    <location>
        <begin position="11"/>
        <end position="34"/>
    </location>
</feature>
<feature type="disulfide bond" evidence="2">
    <location>
        <begin position="20"/>
        <end position="39"/>
    </location>
</feature>
<feature type="disulfide bond" evidence="2">
    <location>
        <begin position="24"/>
        <end position="41"/>
    </location>
</feature>
<evidence type="ECO:0000250" key="1"/>
<evidence type="ECO:0000250" key="2">
    <source>
        <dbReference type="UniProtKB" id="Q86QT3"/>
    </source>
</evidence>
<evidence type="ECO:0000303" key="3">
    <source>
    </source>
</evidence>
<evidence type="ECO:0000305" key="4"/>
<keyword id="KW-1015">Disulfide bond</keyword>
<keyword id="KW-0872">Ion channel impairing toxin</keyword>
<keyword id="KW-0960">Knottin</keyword>
<keyword id="KW-0528">Neurotoxin</keyword>
<keyword id="KW-0632">Potassium channel impairing toxin</keyword>
<keyword id="KW-0964">Secreted</keyword>
<keyword id="KW-0800">Toxin</keyword>
<keyword id="KW-1220">Voltage-gated potassium channel impairing toxin</keyword>
<accession>Q86QU6</accession>
<proteinExistence type="inferred from homology"/>
<dbReference type="EMBL" id="AY159347">
    <property type="protein sequence ID" value="AAO22225.1"/>
    <property type="molecule type" value="mRNA"/>
</dbReference>
<dbReference type="SMR" id="Q86QU6"/>
<dbReference type="GO" id="GO:0005576">
    <property type="term" value="C:extracellular region"/>
    <property type="evidence" value="ECO:0007669"/>
    <property type="project" value="UniProtKB-SubCell"/>
</dbReference>
<dbReference type="GO" id="GO:0019870">
    <property type="term" value="F:potassium channel inhibitor activity"/>
    <property type="evidence" value="ECO:0007669"/>
    <property type="project" value="InterPro"/>
</dbReference>
<dbReference type="GO" id="GO:0090729">
    <property type="term" value="F:toxin activity"/>
    <property type="evidence" value="ECO:0007669"/>
    <property type="project" value="UniProtKB-KW"/>
</dbReference>
<dbReference type="Gene3D" id="3.30.30.10">
    <property type="entry name" value="Knottin, scorpion toxin-like"/>
    <property type="match status" value="1"/>
</dbReference>
<dbReference type="InterPro" id="IPR012622">
    <property type="entry name" value="Ergtoxin"/>
</dbReference>
<dbReference type="InterPro" id="IPR036574">
    <property type="entry name" value="Scorpion_toxin-like_sf"/>
</dbReference>
<dbReference type="Pfam" id="PF08086">
    <property type="entry name" value="Toxin_17"/>
    <property type="match status" value="1"/>
</dbReference>
<dbReference type="SUPFAM" id="SSF57095">
    <property type="entry name" value="Scorpion toxin-like"/>
    <property type="match status" value="1"/>
</dbReference>
<dbReference type="PROSITE" id="PS60026">
    <property type="entry name" value="ERGTX"/>
    <property type="match status" value="1"/>
</dbReference>
<organism>
    <name type="scientific">Centruroides sculpturatus</name>
    <name type="common">Arizona bark scorpion</name>
    <dbReference type="NCBI Taxonomy" id="218467"/>
    <lineage>
        <taxon>Eukaryota</taxon>
        <taxon>Metazoa</taxon>
        <taxon>Ecdysozoa</taxon>
        <taxon>Arthropoda</taxon>
        <taxon>Chelicerata</taxon>
        <taxon>Arachnida</taxon>
        <taxon>Scorpiones</taxon>
        <taxon>Buthida</taxon>
        <taxon>Buthoidea</taxon>
        <taxon>Buthidae</taxon>
        <taxon>Centruroides</taxon>
    </lineage>
</organism>
<comment type="function">
    <text evidence="2">Blocks Kv11/ERG potassium channels.</text>
</comment>
<comment type="subcellular location">
    <subcellularLocation>
        <location evidence="2">Secreted</location>
    </subcellularLocation>
</comment>
<comment type="tissue specificity">
    <text evidence="4">Expressed by the venom gland.</text>
</comment>
<comment type="domain">
    <text evidence="1">The presence of a 'disulfide through disulfide knot' structurally defines this protein as a knottin.</text>
</comment>
<comment type="domain">
    <text evidence="2">Has the CSalpha/beta fold, which comprises one or two short alpha helices connected to anti-parallel beta-sheets stabilized by three or four disulfide bonds.</text>
</comment>
<comment type="similarity">
    <text evidence="4">Belongs to the ergtoxin family. Gamma-KTx 1 subfamily.</text>
</comment>
<reference key="1">
    <citation type="journal article" date="2002" name="FEBS Lett.">
        <title>A large number of novel Ergtoxin-like genes and ERG K+-channels blocking peptides from scorpions of the genus Centruroides.</title>
        <authorList>
            <person name="Corona M."/>
            <person name="Gurrola G.B."/>
            <person name="Merino E."/>
            <person name="Cassulini R.R."/>
            <person name="Valdez-Cruz N.A."/>
            <person name="Garcia B."/>
            <person name="Ramirez-Dominguez M.E."/>
            <person name="Coronas F.I."/>
            <person name="Zamudio F.Z."/>
            <person name="Wanke E."/>
            <person name="Possani L.D."/>
        </authorList>
    </citation>
    <scope>NUCLEOTIDE SEQUENCE [MRNA]</scope>
    <scope>NOMENCLATURE</scope>
    <source>
        <tissue>Venom gland</tissue>
    </source>
</reference>
<sequence length="42" mass="4752">DRDSCVDKSRCAKYGYYQECQDCCKKAGHNGGTCMFFKCKCA</sequence>
<protein>
    <recommendedName>
        <fullName evidence="3">Potassium channel toxin gamma-KTx 1.4</fullName>
    </recommendedName>
    <alternativeName>
        <fullName evidence="4">CsErgTx1</fullName>
        <shortName evidence="3">CsErg1</shortName>
    </alternativeName>
    <alternativeName>
        <fullName evidence="3">Ergtoxin-like protein</fullName>
    </alternativeName>
</protein>
<name>KGX14_CENSC</name>